<proteinExistence type="evidence at protein level"/>
<comment type="function">
    <text evidence="4 6 7">Subunit of STT3A-containing oligosaccharyl transferase (OST-A) complex that catalyzes the initial transfer of a defined glycan (Glc(3)Man(9)GlcNAc(2) in eukaryotes) from the lipid carrier dolichol-pyrophosphate to an asparagine residue within an Asn-X-Ser/Thr consensus motif in nascent polypeptide chains, the first step in protein N-glycosylation (PubMed:22467853, PubMed:28860277). N-glycosylation occurs cotranslationally and the complex associates with the Sec61 complex at the channel-forming translocon complex that mediates protein translocation across the endoplasmic reticulum (ER) (PubMed:22467853, PubMed:28860277). Within the OST-A complex, acts as an adapter that anchors the OST-A complex to the Sec61 complex (PubMed:28860277). May be involved in N-glycosylation of APP (amyloid-beta precursor protein) (PubMed:21768116). Can modulate gamma-secretase cleavage of APP by enhancing endoprotelysis of PSEN1 (PubMed:21768116).</text>
</comment>
<comment type="pathway">
    <text evidence="6 7">Protein modification; protein glycosylation.</text>
</comment>
<comment type="subunit">
    <text evidence="4 5 7">Component of STT3A-containing oligosaccharyl transferase (OST-A) complex (PubMed:22266900, PubMed:28860277). STT3A-containing complex assembly occurs through the formation of 3 subcomplexes. Subcomplex 1 contains RPN1 and TMEM258, subcomplex 2 contains the STT3A-specific subunits STT3A, DC2/OSTC, and KCP2 as well as the core subunit OST4, and subcomplex 3 contains RPN2, DAD1, and OST48 (PubMed:22266900). The OST-A complex can form stable complexes with the Sec61 complex or with both the Sec61 and TRAP complexes (PubMed:22266900). Interacts with PSEN1 and NCSTN; indicative for an association with the gamma-secretase complex (PubMed:21768116).</text>
</comment>
<comment type="subcellular location">
    <subcellularLocation>
        <location evidence="4">Endoplasmic reticulum</location>
    </subcellularLocation>
    <subcellularLocation>
        <location evidence="5">Endoplasmic reticulum membrane</location>
        <topology evidence="5">Multi-pass membrane protein</topology>
    </subcellularLocation>
</comment>
<comment type="alternative products">
    <event type="alternative initiation"/>
    <isoform>
        <id>Q8N6L1-1</id>
        <name>1</name>
        <sequence type="displayed"/>
    </isoform>
    <isoform>
        <id>Q8N6L1-2</id>
        <name>2</name>
        <sequence type="described" ref="VSP_053439"/>
    </isoform>
</comment>
<comment type="tissue specificity">
    <text evidence="2">Expressed in skin, heart, placental, liver, skeletal muscle, kidney, pancreas, keratinocytes and dermal fibroblasts.</text>
</comment>
<comment type="miscellaneous">
    <molecule>Isoform 2</molecule>
    <text evidence="11">Produced at low levels due to suboptimal Kozak context.</text>
</comment>
<comment type="similarity">
    <text evidence="11">Belongs to the KRTCAP2 family.</text>
</comment>
<dbReference type="EMBL" id="AY157577">
    <property type="protein sequence ID" value="AAO13161.2"/>
    <property type="molecule type" value="mRNA"/>
</dbReference>
<dbReference type="EMBL" id="AK311907">
    <property type="protein sequence ID" value="BAG34848.1"/>
    <property type="molecule type" value="mRNA"/>
</dbReference>
<dbReference type="EMBL" id="AL607067">
    <property type="status" value="NOT_ANNOTATED_CDS"/>
    <property type="molecule type" value="Genomic_DNA"/>
</dbReference>
<dbReference type="EMBL" id="BC029806">
    <property type="protein sequence ID" value="AAH29806.1"/>
    <property type="molecule type" value="mRNA"/>
</dbReference>
<dbReference type="EMBL" id="BC048205">
    <property type="protein sequence ID" value="AAH48205.1"/>
    <property type="molecule type" value="mRNA"/>
</dbReference>
<dbReference type="EMBL" id="BC057233">
    <property type="protein sequence ID" value="AAH57233.1"/>
    <property type="molecule type" value="mRNA"/>
</dbReference>
<dbReference type="CCDS" id="CCDS1096.2">
    <molecule id="Q8N6L1-1"/>
</dbReference>
<dbReference type="RefSeq" id="NP_776251.2">
    <molecule id="Q8N6L1-1"/>
    <property type="nucleotide sequence ID" value="NM_173852.4"/>
</dbReference>
<dbReference type="BioGRID" id="128307">
    <property type="interactions" value="73"/>
</dbReference>
<dbReference type="ComplexPortal" id="CPX-5621">
    <property type="entry name" value="Oligosaccharyltransferase complex A"/>
</dbReference>
<dbReference type="FunCoup" id="Q8N6L1">
    <property type="interactions" value="270"/>
</dbReference>
<dbReference type="IntAct" id="Q8N6L1">
    <property type="interactions" value="68"/>
</dbReference>
<dbReference type="MINT" id="Q8N6L1"/>
<dbReference type="STRING" id="9606.ENSP00000295682"/>
<dbReference type="iPTMnet" id="Q8N6L1"/>
<dbReference type="PhosphoSitePlus" id="Q8N6L1"/>
<dbReference type="SwissPalm" id="Q8N6L1"/>
<dbReference type="BioMuta" id="KRTCAP2"/>
<dbReference type="DMDM" id="557952588"/>
<dbReference type="jPOST" id="Q8N6L1"/>
<dbReference type="MassIVE" id="Q8N6L1"/>
<dbReference type="PaxDb" id="9606-ENSP00000295682"/>
<dbReference type="PeptideAtlas" id="Q8N6L1"/>
<dbReference type="ProteomicsDB" id="72188">
    <molecule id="Q8N6L1-1"/>
</dbReference>
<dbReference type="TopDownProteomics" id="Q8N6L1-2">
    <molecule id="Q8N6L1-2"/>
</dbReference>
<dbReference type="Antibodypedia" id="56363">
    <property type="antibodies" value="61 antibodies from 15 providers"/>
</dbReference>
<dbReference type="DNASU" id="200185"/>
<dbReference type="Ensembl" id="ENST00000295682.6">
    <molecule id="Q8N6L1-1"/>
    <property type="protein sequence ID" value="ENSP00000295682.5"/>
    <property type="gene ID" value="ENSG00000163463.13"/>
</dbReference>
<dbReference type="GeneID" id="200185"/>
<dbReference type="KEGG" id="hsa:200185"/>
<dbReference type="MANE-Select" id="ENST00000295682.6">
    <property type="protein sequence ID" value="ENSP00000295682.5"/>
    <property type="RefSeq nucleotide sequence ID" value="NM_173852.4"/>
    <property type="RefSeq protein sequence ID" value="NP_776251.2"/>
</dbReference>
<dbReference type="UCSC" id="uc001fho.4">
    <molecule id="Q8N6L1-1"/>
    <property type="organism name" value="human"/>
</dbReference>
<dbReference type="AGR" id="HGNC:28942"/>
<dbReference type="CTD" id="200185"/>
<dbReference type="DisGeNET" id="200185"/>
<dbReference type="GeneCards" id="KRTCAP2"/>
<dbReference type="HGNC" id="HGNC:28942">
    <property type="gene designation" value="KRTCAP2"/>
</dbReference>
<dbReference type="HPA" id="ENSG00000163463">
    <property type="expression patterns" value="Low tissue specificity"/>
</dbReference>
<dbReference type="MIM" id="619029">
    <property type="type" value="gene"/>
</dbReference>
<dbReference type="neXtProt" id="NX_Q8N6L1"/>
<dbReference type="OpenTargets" id="ENSG00000163463"/>
<dbReference type="PharmGKB" id="PA134967679"/>
<dbReference type="VEuPathDB" id="HostDB:ENSG00000163463"/>
<dbReference type="eggNOG" id="KOG4615">
    <property type="taxonomic scope" value="Eukaryota"/>
</dbReference>
<dbReference type="GeneTree" id="ENSGT00390000003552"/>
<dbReference type="HOGENOM" id="CLU_109648_2_0_1"/>
<dbReference type="InParanoid" id="Q8N6L1"/>
<dbReference type="OMA" id="ITIYYMN"/>
<dbReference type="OrthoDB" id="9537453at2759"/>
<dbReference type="PAN-GO" id="Q8N6L1">
    <property type="GO annotations" value="1 GO annotation based on evolutionary models"/>
</dbReference>
<dbReference type="TreeFam" id="TF324347"/>
<dbReference type="PathwayCommons" id="Q8N6L1"/>
<dbReference type="SignaLink" id="Q8N6L1"/>
<dbReference type="UniPathway" id="UPA00378"/>
<dbReference type="BioGRID-ORCS" id="200185">
    <property type="hits" value="65 hits in 1161 CRISPR screens"/>
</dbReference>
<dbReference type="ChiTaRS" id="KRTCAP2">
    <property type="organism name" value="human"/>
</dbReference>
<dbReference type="GenomeRNAi" id="200185"/>
<dbReference type="Pharos" id="Q8N6L1">
    <property type="development level" value="Tbio"/>
</dbReference>
<dbReference type="PRO" id="PR:Q8N6L1"/>
<dbReference type="Proteomes" id="UP000005640">
    <property type="component" value="Chromosome 1"/>
</dbReference>
<dbReference type="RNAct" id="Q8N6L1">
    <property type="molecule type" value="protein"/>
</dbReference>
<dbReference type="Bgee" id="ENSG00000163463">
    <property type="expression patterns" value="Expressed in right testis and 109 other cell types or tissues"/>
</dbReference>
<dbReference type="ExpressionAtlas" id="Q8N6L1">
    <property type="expression patterns" value="baseline and differential"/>
</dbReference>
<dbReference type="GO" id="GO:0008250">
    <property type="term" value="C:oligosaccharyltransferase complex"/>
    <property type="evidence" value="ECO:0000314"/>
    <property type="project" value="UniProtKB"/>
</dbReference>
<dbReference type="GO" id="GO:0008047">
    <property type="term" value="F:enzyme activator activity"/>
    <property type="evidence" value="ECO:0000315"/>
    <property type="project" value="ARUK-UCL"/>
</dbReference>
<dbReference type="GO" id="GO:0030674">
    <property type="term" value="F:protein-macromolecule adaptor activity"/>
    <property type="evidence" value="ECO:0000314"/>
    <property type="project" value="UniProtKB"/>
</dbReference>
<dbReference type="GO" id="GO:0006487">
    <property type="term" value="P:protein N-linked glycosylation"/>
    <property type="evidence" value="ECO:0000315"/>
    <property type="project" value="UniProtKB"/>
</dbReference>
<dbReference type="GO" id="GO:0018279">
    <property type="term" value="P:protein N-linked glycosylation via asparagine"/>
    <property type="evidence" value="ECO:0000314"/>
    <property type="project" value="UniProtKB"/>
</dbReference>
<dbReference type="InterPro" id="IPR018614">
    <property type="entry name" value="KRTCAP2"/>
</dbReference>
<dbReference type="PANTHER" id="PTHR32001">
    <property type="entry name" value="KERATINOCYTE-ASSOCIATED PROTEIN 2"/>
    <property type="match status" value="1"/>
</dbReference>
<dbReference type="PANTHER" id="PTHR32001:SF1">
    <property type="entry name" value="KERATINOCYTE-ASSOCIATED PROTEIN 2"/>
    <property type="match status" value="1"/>
</dbReference>
<dbReference type="Pfam" id="PF09775">
    <property type="entry name" value="Keratin_assoc"/>
    <property type="match status" value="1"/>
</dbReference>
<organism>
    <name type="scientific">Homo sapiens</name>
    <name type="common">Human</name>
    <dbReference type="NCBI Taxonomy" id="9606"/>
    <lineage>
        <taxon>Eukaryota</taxon>
        <taxon>Metazoa</taxon>
        <taxon>Chordata</taxon>
        <taxon>Craniata</taxon>
        <taxon>Vertebrata</taxon>
        <taxon>Euteleostomi</taxon>
        <taxon>Mammalia</taxon>
        <taxon>Eutheria</taxon>
        <taxon>Euarchontoglires</taxon>
        <taxon>Primates</taxon>
        <taxon>Haplorrhini</taxon>
        <taxon>Catarrhini</taxon>
        <taxon>Hominidae</taxon>
        <taxon>Homo</taxon>
    </lineage>
</organism>
<sequence length="136" mass="14679">MVVGTGTSLALSSLLSLLLFAGMQMYSRQLASTEWLTIQGGLLGSGLFVFSLTAFNNLENLVFGKGFQAKIFPEILLCLLLALFASGLIHRVCVTTCFIFSMVGLYYINKISSTLYQAAAPVLTPAKVTGKSKKRN</sequence>
<feature type="chain" id="PRO_0000226992" description="Dolichyl-diphosphooligosaccharide--protein glycosyltransferase subunit KCP2">
    <location>
        <begin position="1"/>
        <end position="136"/>
    </location>
</feature>
<feature type="topological domain" description="Lumenal" evidence="1">
    <location>
        <begin position="1"/>
        <end position="5"/>
    </location>
</feature>
<feature type="transmembrane region" description="Helical" evidence="1">
    <location>
        <begin position="6"/>
        <end position="23"/>
    </location>
</feature>
<feature type="topological domain" description="Cytoplasmic" evidence="1">
    <location>
        <begin position="24"/>
        <end position="34"/>
    </location>
</feature>
<feature type="transmembrane region" description="Helical" evidence="1">
    <location>
        <begin position="35"/>
        <end position="55"/>
    </location>
</feature>
<feature type="topological domain" description="Lumenal" evidence="1">
    <location>
        <begin position="56"/>
        <end position="75"/>
    </location>
</feature>
<feature type="transmembrane region" description="Helical" evidence="1">
    <location>
        <begin position="76"/>
        <end position="108"/>
    </location>
</feature>
<feature type="topological domain" description="Cytoplasmic" evidence="1">
    <location>
        <begin position="109"/>
        <end position="136"/>
    </location>
</feature>
<feature type="short sequence motif" description="Prevents secretion from ER" evidence="1">
    <location>
        <begin position="133"/>
        <end position="136"/>
    </location>
</feature>
<feature type="modified residue" description="Phosphothreonine" evidence="12 13 14">
    <location>
        <position position="124"/>
    </location>
</feature>
<feature type="splice variant" id="VSP_053439" description="In isoform 2." evidence="8 9">
    <original>M</original>
    <variation>MRIANRTRFSSPFLARGAGWTHGRGMM</variation>
    <location>
        <position position="1"/>
    </location>
</feature>
<feature type="sequence variant" id="VAR_025531" description="In dbSNP:rs17854920." evidence="3">
    <original>G</original>
    <variation>V</variation>
    <location>
        <position position="4"/>
    </location>
</feature>
<feature type="sequence conflict" description="In Ref. 4; AAO13161." evidence="11" ref="4">
    <original>G</original>
    <variation>S</variation>
    <location>
        <position position="87"/>
    </location>
</feature>
<keyword id="KW-0024">Alternative initiation</keyword>
<keyword id="KW-0256">Endoplasmic reticulum</keyword>
<keyword id="KW-0472">Membrane</keyword>
<keyword id="KW-0597">Phosphoprotein</keyword>
<keyword id="KW-1267">Proteomics identification</keyword>
<keyword id="KW-1185">Reference proteome</keyword>
<keyword id="KW-0812">Transmembrane</keyword>
<keyword id="KW-1133">Transmembrane helix</keyword>
<protein>
    <recommendedName>
        <fullName>Dolichyl-diphosphooligosaccharide--protein glycosyltransferase subunit KCP2</fullName>
        <shortName>Oligosaccharyl transferase subunit KCP2</shortName>
    </recommendedName>
    <alternativeName>
        <fullName>Keratinocyte-associated protein 2</fullName>
        <shortName>KCP-2</shortName>
    </alternativeName>
</protein>
<accession>Q8N6L1</accession>
<accession>B2R4Q1</accession>
<accession>Q6PG45</accession>
<accession>Q86XW2</accession>
<accession>Q8IWS4</accession>
<gene>
    <name type="primary">KRTCAP2</name>
    <name evidence="10" type="synonym">KCP2</name>
</gene>
<evidence type="ECO:0000255" key="1"/>
<evidence type="ECO:0000269" key="2">
    <source>
    </source>
</evidence>
<evidence type="ECO:0000269" key="3">
    <source>
    </source>
</evidence>
<evidence type="ECO:0000269" key="4">
    <source>
    </source>
</evidence>
<evidence type="ECO:0000269" key="5">
    <source>
    </source>
</evidence>
<evidence type="ECO:0000269" key="6">
    <source>
    </source>
</evidence>
<evidence type="ECO:0000269" key="7">
    <source>
    </source>
</evidence>
<evidence type="ECO:0000303" key="8">
    <source>
    </source>
</evidence>
<evidence type="ECO:0000303" key="9">
    <source>
    </source>
</evidence>
<evidence type="ECO:0000303" key="10">
    <source>
    </source>
</evidence>
<evidence type="ECO:0000305" key="11"/>
<evidence type="ECO:0007744" key="12">
    <source>
    </source>
</evidence>
<evidence type="ECO:0007744" key="13">
    <source>
    </source>
</evidence>
<evidence type="ECO:0007744" key="14">
    <source>
    </source>
</evidence>
<name>KTAP2_HUMAN</name>
<reference key="1">
    <citation type="journal article" date="2003" name="Br. J. Dermatol.">
        <title>Identification of novel genes for secreted and membrane-anchored proteins in human keratinocytes.</title>
        <authorList>
            <person name="Bonkobara M."/>
            <person name="Das A."/>
            <person name="Takao J."/>
            <person name="Cruz P.D. Jr."/>
            <person name="Ariizumi K."/>
        </authorList>
    </citation>
    <scope>NUCLEOTIDE SEQUENCE [MRNA] (ISOFORM 1)</scope>
    <scope>TISSUE SPECIFICITY</scope>
    <source>
        <tissue>Keratinocyte</tissue>
    </source>
</reference>
<reference key="2">
    <citation type="journal article" date="2004" name="Nat. Genet.">
        <title>Complete sequencing and characterization of 21,243 full-length human cDNAs.</title>
        <authorList>
            <person name="Ota T."/>
            <person name="Suzuki Y."/>
            <person name="Nishikawa T."/>
            <person name="Otsuki T."/>
            <person name="Sugiyama T."/>
            <person name="Irie R."/>
            <person name="Wakamatsu A."/>
            <person name="Hayashi K."/>
            <person name="Sato H."/>
            <person name="Nagai K."/>
            <person name="Kimura K."/>
            <person name="Makita H."/>
            <person name="Sekine M."/>
            <person name="Obayashi M."/>
            <person name="Nishi T."/>
            <person name="Shibahara T."/>
            <person name="Tanaka T."/>
            <person name="Ishii S."/>
            <person name="Yamamoto J."/>
            <person name="Saito K."/>
            <person name="Kawai Y."/>
            <person name="Isono Y."/>
            <person name="Nakamura Y."/>
            <person name="Nagahari K."/>
            <person name="Murakami K."/>
            <person name="Yasuda T."/>
            <person name="Iwayanagi T."/>
            <person name="Wagatsuma M."/>
            <person name="Shiratori A."/>
            <person name="Sudo H."/>
            <person name="Hosoiri T."/>
            <person name="Kaku Y."/>
            <person name="Kodaira H."/>
            <person name="Kondo H."/>
            <person name="Sugawara M."/>
            <person name="Takahashi M."/>
            <person name="Kanda K."/>
            <person name="Yokoi T."/>
            <person name="Furuya T."/>
            <person name="Kikkawa E."/>
            <person name="Omura Y."/>
            <person name="Abe K."/>
            <person name="Kamihara K."/>
            <person name="Katsuta N."/>
            <person name="Sato K."/>
            <person name="Tanikawa M."/>
            <person name="Yamazaki M."/>
            <person name="Ninomiya K."/>
            <person name="Ishibashi T."/>
            <person name="Yamashita H."/>
            <person name="Murakawa K."/>
            <person name="Fujimori K."/>
            <person name="Tanai H."/>
            <person name="Kimata M."/>
            <person name="Watanabe M."/>
            <person name="Hiraoka S."/>
            <person name="Chiba Y."/>
            <person name="Ishida S."/>
            <person name="Ono Y."/>
            <person name="Takiguchi S."/>
            <person name="Watanabe S."/>
            <person name="Yosida M."/>
            <person name="Hotuta T."/>
            <person name="Kusano J."/>
            <person name="Kanehori K."/>
            <person name="Takahashi-Fujii A."/>
            <person name="Hara H."/>
            <person name="Tanase T.-O."/>
            <person name="Nomura Y."/>
            <person name="Togiya S."/>
            <person name="Komai F."/>
            <person name="Hara R."/>
            <person name="Takeuchi K."/>
            <person name="Arita M."/>
            <person name="Imose N."/>
            <person name="Musashino K."/>
            <person name="Yuuki H."/>
            <person name="Oshima A."/>
            <person name="Sasaki N."/>
            <person name="Aotsuka S."/>
            <person name="Yoshikawa Y."/>
            <person name="Matsunawa H."/>
            <person name="Ichihara T."/>
            <person name="Shiohata N."/>
            <person name="Sano S."/>
            <person name="Moriya S."/>
            <person name="Momiyama H."/>
            <person name="Satoh N."/>
            <person name="Takami S."/>
            <person name="Terashima Y."/>
            <person name="Suzuki O."/>
            <person name="Nakagawa S."/>
            <person name="Senoh A."/>
            <person name="Mizoguchi H."/>
            <person name="Goto Y."/>
            <person name="Shimizu F."/>
            <person name="Wakebe H."/>
            <person name="Hishigaki H."/>
            <person name="Watanabe T."/>
            <person name="Sugiyama A."/>
            <person name="Takemoto M."/>
            <person name="Kawakami B."/>
            <person name="Yamazaki M."/>
            <person name="Watanabe K."/>
            <person name="Kumagai A."/>
            <person name="Itakura S."/>
            <person name="Fukuzumi Y."/>
            <person name="Fujimori Y."/>
            <person name="Komiyama M."/>
            <person name="Tashiro H."/>
            <person name="Tanigami A."/>
            <person name="Fujiwara T."/>
            <person name="Ono T."/>
            <person name="Yamada K."/>
            <person name="Fujii Y."/>
            <person name="Ozaki K."/>
            <person name="Hirao M."/>
            <person name="Ohmori Y."/>
            <person name="Kawabata A."/>
            <person name="Hikiji T."/>
            <person name="Kobatake N."/>
            <person name="Inagaki H."/>
            <person name="Ikema Y."/>
            <person name="Okamoto S."/>
            <person name="Okitani R."/>
            <person name="Kawakami T."/>
            <person name="Noguchi S."/>
            <person name="Itoh T."/>
            <person name="Shigeta K."/>
            <person name="Senba T."/>
            <person name="Matsumura K."/>
            <person name="Nakajima Y."/>
            <person name="Mizuno T."/>
            <person name="Morinaga M."/>
            <person name="Sasaki M."/>
            <person name="Togashi T."/>
            <person name="Oyama M."/>
            <person name="Hata H."/>
            <person name="Watanabe M."/>
            <person name="Komatsu T."/>
            <person name="Mizushima-Sugano J."/>
            <person name="Satoh T."/>
            <person name="Shirai Y."/>
            <person name="Takahashi Y."/>
            <person name="Nakagawa K."/>
            <person name="Okumura K."/>
            <person name="Nagase T."/>
            <person name="Nomura N."/>
            <person name="Kikuchi H."/>
            <person name="Masuho Y."/>
            <person name="Yamashita R."/>
            <person name="Nakai K."/>
            <person name="Yada T."/>
            <person name="Nakamura Y."/>
            <person name="Ohara O."/>
            <person name="Isogai T."/>
            <person name="Sugano S."/>
        </authorList>
    </citation>
    <scope>NUCLEOTIDE SEQUENCE [LARGE SCALE MRNA] (ISOFORM 2)</scope>
    <source>
        <tissue>Testis</tissue>
    </source>
</reference>
<reference key="3">
    <citation type="journal article" date="2006" name="Nature">
        <title>The DNA sequence and biological annotation of human chromosome 1.</title>
        <authorList>
            <person name="Gregory S.G."/>
            <person name="Barlow K.F."/>
            <person name="McLay K.E."/>
            <person name="Kaul R."/>
            <person name="Swarbreck D."/>
            <person name="Dunham A."/>
            <person name="Scott C.E."/>
            <person name="Howe K.L."/>
            <person name="Woodfine K."/>
            <person name="Spencer C.C.A."/>
            <person name="Jones M.C."/>
            <person name="Gillson C."/>
            <person name="Searle S."/>
            <person name="Zhou Y."/>
            <person name="Kokocinski F."/>
            <person name="McDonald L."/>
            <person name="Evans R."/>
            <person name="Phillips K."/>
            <person name="Atkinson A."/>
            <person name="Cooper R."/>
            <person name="Jones C."/>
            <person name="Hall R.E."/>
            <person name="Andrews T.D."/>
            <person name="Lloyd C."/>
            <person name="Ainscough R."/>
            <person name="Almeida J.P."/>
            <person name="Ambrose K.D."/>
            <person name="Anderson F."/>
            <person name="Andrew R.W."/>
            <person name="Ashwell R.I.S."/>
            <person name="Aubin K."/>
            <person name="Babbage A.K."/>
            <person name="Bagguley C.L."/>
            <person name="Bailey J."/>
            <person name="Beasley H."/>
            <person name="Bethel G."/>
            <person name="Bird C.P."/>
            <person name="Bray-Allen S."/>
            <person name="Brown J.Y."/>
            <person name="Brown A.J."/>
            <person name="Buckley D."/>
            <person name="Burton J."/>
            <person name="Bye J."/>
            <person name="Carder C."/>
            <person name="Chapman J.C."/>
            <person name="Clark S.Y."/>
            <person name="Clarke G."/>
            <person name="Clee C."/>
            <person name="Cobley V."/>
            <person name="Collier R.E."/>
            <person name="Corby N."/>
            <person name="Coville G.J."/>
            <person name="Davies J."/>
            <person name="Deadman R."/>
            <person name="Dunn M."/>
            <person name="Earthrowl M."/>
            <person name="Ellington A.G."/>
            <person name="Errington H."/>
            <person name="Frankish A."/>
            <person name="Frankland J."/>
            <person name="French L."/>
            <person name="Garner P."/>
            <person name="Garnett J."/>
            <person name="Gay L."/>
            <person name="Ghori M.R.J."/>
            <person name="Gibson R."/>
            <person name="Gilby L.M."/>
            <person name="Gillett W."/>
            <person name="Glithero R.J."/>
            <person name="Grafham D.V."/>
            <person name="Griffiths C."/>
            <person name="Griffiths-Jones S."/>
            <person name="Grocock R."/>
            <person name="Hammond S."/>
            <person name="Harrison E.S.I."/>
            <person name="Hart E."/>
            <person name="Haugen E."/>
            <person name="Heath P.D."/>
            <person name="Holmes S."/>
            <person name="Holt K."/>
            <person name="Howden P.J."/>
            <person name="Hunt A.R."/>
            <person name="Hunt S.E."/>
            <person name="Hunter G."/>
            <person name="Isherwood J."/>
            <person name="James R."/>
            <person name="Johnson C."/>
            <person name="Johnson D."/>
            <person name="Joy A."/>
            <person name="Kay M."/>
            <person name="Kershaw J.K."/>
            <person name="Kibukawa M."/>
            <person name="Kimberley A.M."/>
            <person name="King A."/>
            <person name="Knights A.J."/>
            <person name="Lad H."/>
            <person name="Laird G."/>
            <person name="Lawlor S."/>
            <person name="Leongamornlert D.A."/>
            <person name="Lloyd D.M."/>
            <person name="Loveland J."/>
            <person name="Lovell J."/>
            <person name="Lush M.J."/>
            <person name="Lyne R."/>
            <person name="Martin S."/>
            <person name="Mashreghi-Mohammadi M."/>
            <person name="Matthews L."/>
            <person name="Matthews N.S.W."/>
            <person name="McLaren S."/>
            <person name="Milne S."/>
            <person name="Mistry S."/>
            <person name="Moore M.J.F."/>
            <person name="Nickerson T."/>
            <person name="O'Dell C.N."/>
            <person name="Oliver K."/>
            <person name="Palmeiri A."/>
            <person name="Palmer S.A."/>
            <person name="Parker A."/>
            <person name="Patel D."/>
            <person name="Pearce A.V."/>
            <person name="Peck A.I."/>
            <person name="Pelan S."/>
            <person name="Phelps K."/>
            <person name="Phillimore B.J."/>
            <person name="Plumb R."/>
            <person name="Rajan J."/>
            <person name="Raymond C."/>
            <person name="Rouse G."/>
            <person name="Saenphimmachak C."/>
            <person name="Sehra H.K."/>
            <person name="Sheridan E."/>
            <person name="Shownkeen R."/>
            <person name="Sims S."/>
            <person name="Skuce C.D."/>
            <person name="Smith M."/>
            <person name="Steward C."/>
            <person name="Subramanian S."/>
            <person name="Sycamore N."/>
            <person name="Tracey A."/>
            <person name="Tromans A."/>
            <person name="Van Helmond Z."/>
            <person name="Wall M."/>
            <person name="Wallis J.M."/>
            <person name="White S."/>
            <person name="Whitehead S.L."/>
            <person name="Wilkinson J.E."/>
            <person name="Willey D.L."/>
            <person name="Williams H."/>
            <person name="Wilming L."/>
            <person name="Wray P.W."/>
            <person name="Wu Z."/>
            <person name="Coulson A."/>
            <person name="Vaudin M."/>
            <person name="Sulston J.E."/>
            <person name="Durbin R.M."/>
            <person name="Hubbard T."/>
            <person name="Wooster R."/>
            <person name="Dunham I."/>
            <person name="Carter N.P."/>
            <person name="McVean G."/>
            <person name="Ross M.T."/>
            <person name="Harrow J."/>
            <person name="Olson M.V."/>
            <person name="Beck S."/>
            <person name="Rogers J."/>
            <person name="Bentley D.R."/>
        </authorList>
    </citation>
    <scope>NUCLEOTIDE SEQUENCE [LARGE SCALE GENOMIC DNA]</scope>
</reference>
<reference key="4">
    <citation type="journal article" date="2004" name="Genome Res.">
        <title>The status, quality, and expansion of the NIH full-length cDNA project: the Mammalian Gene Collection (MGC).</title>
        <authorList>
            <consortium name="The MGC Project Team"/>
        </authorList>
    </citation>
    <scope>NUCLEOTIDE SEQUENCE [LARGE SCALE MRNA] (ISOFORM 2)</scope>
    <scope>VARIANT VAL-4</scope>
    <source>
        <tissue>Brain</tissue>
        <tissue>Colon</tissue>
        <tissue>Kidney</tissue>
        <tissue>Stomach</tissue>
    </source>
</reference>
<reference key="5">
    <citation type="journal article" date="2008" name="Proc. Natl. Acad. Sci. U.S.A.">
        <title>A quantitative atlas of mitotic phosphorylation.</title>
        <authorList>
            <person name="Dephoure N."/>
            <person name="Zhou C."/>
            <person name="Villen J."/>
            <person name="Beausoleil S.A."/>
            <person name="Bakalarski C.E."/>
            <person name="Elledge S.J."/>
            <person name="Gygi S.P."/>
        </authorList>
    </citation>
    <scope>PHOSPHORYLATION [LARGE SCALE ANALYSIS] AT THR-124</scope>
    <scope>IDENTIFICATION BY MASS SPECTROMETRY [LARGE SCALE ANALYSIS]</scope>
    <source>
        <tissue>Cervix carcinoma</tissue>
    </source>
</reference>
<reference key="6">
    <citation type="journal article" date="2009" name="Anal. Chem.">
        <title>Lys-N and trypsin cover complementary parts of the phosphoproteome in a refined SCX-based approach.</title>
        <authorList>
            <person name="Gauci S."/>
            <person name="Helbig A.O."/>
            <person name="Slijper M."/>
            <person name="Krijgsveld J."/>
            <person name="Heck A.J."/>
            <person name="Mohammed S."/>
        </authorList>
    </citation>
    <scope>IDENTIFICATION BY MASS SPECTROMETRY [LARGE SCALE ANALYSIS]</scope>
</reference>
<reference key="7">
    <citation type="journal article" date="2010" name="Sci. Signal.">
        <title>Quantitative phosphoproteomics reveals widespread full phosphorylation site occupancy during mitosis.</title>
        <authorList>
            <person name="Olsen J.V."/>
            <person name="Vermeulen M."/>
            <person name="Santamaria A."/>
            <person name="Kumar C."/>
            <person name="Miller M.L."/>
            <person name="Jensen L.J."/>
            <person name="Gnad F."/>
            <person name="Cox J."/>
            <person name="Jensen T.S."/>
            <person name="Nigg E.A."/>
            <person name="Brunak S."/>
            <person name="Mann M."/>
        </authorList>
    </citation>
    <scope>PHOSPHORYLATION [LARGE SCALE ANALYSIS] AT THR-124</scope>
    <scope>IDENTIFICATION BY MASS SPECTROMETRY [LARGE SCALE ANALYSIS]</scope>
    <source>
        <tissue>Cervix carcinoma</tissue>
    </source>
</reference>
<reference key="8">
    <citation type="journal article" date="2011" name="BMC Syst. Biol.">
        <title>Initial characterization of the human central proteome.</title>
        <authorList>
            <person name="Burkard T.R."/>
            <person name="Planyavsky M."/>
            <person name="Kaupe I."/>
            <person name="Breitwieser F.P."/>
            <person name="Buerckstuemmer T."/>
            <person name="Bennett K.L."/>
            <person name="Superti-Furga G."/>
            <person name="Colinge J."/>
        </authorList>
    </citation>
    <scope>IDENTIFICATION BY MASS SPECTROMETRY [LARGE SCALE ANALYSIS]</scope>
</reference>
<reference key="9">
    <citation type="journal article" date="2011" name="J. Biol. Chem.">
        <title>DC2 and keratinocyte-associated protein 2 (KCP2), subunits of the oligosaccharyltransferase complex, are regulators of the gamma-secretase-directed processing of amyloid precursor protein (APP).</title>
        <authorList>
            <person name="Wilson C.M."/>
            <person name="Magnaudeix A."/>
            <person name="Yardin C."/>
            <person name="Terro F."/>
        </authorList>
    </citation>
    <scope>FUNCTION</scope>
    <scope>SUBCELLULAR LOCATION</scope>
    <scope>INTERACTION WITH PSEN1 AND NCSTN</scope>
</reference>
<reference key="10">
    <citation type="journal article" date="2012" name="J. Cell Sci.">
        <title>Keratinocyte-associated protein 2 is a bona fide subunit of the mammalian oligosaccharyltransferase.</title>
        <authorList>
            <person name="Roboti P."/>
            <person name="High S."/>
        </authorList>
    </citation>
    <scope>SUBUNIT</scope>
    <scope>SUBCELLULAR LOCATION</scope>
    <scope>ER RETENTION MOTIF</scope>
    <scope>TOPOLOGY</scope>
    <scope>ALTERNATIVE INITIATION</scope>
    <scope>INTERACTION WITH STT3A</scope>
</reference>
<reference key="11">
    <citation type="journal article" date="2012" name="J. Cell Sci.">
        <title>The oligosaccharyltransferase subunits OST48, DAD1 and KCP2 function as ubiquitous and selective modulators of mammalian N-glycosylation.</title>
        <authorList>
            <person name="Roboti P."/>
            <person name="High S."/>
        </authorList>
    </citation>
    <scope>FUNCTION</scope>
</reference>
<reference key="12">
    <citation type="journal article" date="2013" name="J. Proteome Res.">
        <title>Toward a comprehensive characterization of a human cancer cell phosphoproteome.</title>
        <authorList>
            <person name="Zhou H."/>
            <person name="Di Palma S."/>
            <person name="Preisinger C."/>
            <person name="Peng M."/>
            <person name="Polat A.N."/>
            <person name="Heck A.J."/>
            <person name="Mohammed S."/>
        </authorList>
    </citation>
    <scope>PHOSPHORYLATION [LARGE SCALE ANALYSIS] AT THR-124</scope>
    <scope>IDENTIFICATION BY MASS SPECTROMETRY [LARGE SCALE ANALYSIS]</scope>
    <source>
        <tissue>Cervix carcinoma</tissue>
        <tissue>Erythroleukemia</tissue>
    </source>
</reference>
<reference key="13">
    <citation type="journal article" date="2017" name="J. Cell Biol.">
        <title>DC2 and KCP2 mediate the interaction between the oligosaccharyltransferase and the ER translocon.</title>
        <authorList>
            <person name="Shrimal S."/>
            <person name="Cherepanova N.A."/>
            <person name="Gilmore R."/>
        </authorList>
    </citation>
    <scope>FUNCTION</scope>
    <scope>SUBUNIT</scope>
    <scope>PATHWAY</scope>
</reference>